<name>MURC_BUCBP</name>
<comment type="function">
    <text evidence="1">Cell wall formation.</text>
</comment>
<comment type="catalytic activity">
    <reaction evidence="1">
        <text>UDP-N-acetyl-alpha-D-muramate + L-alanine + ATP = UDP-N-acetyl-alpha-D-muramoyl-L-alanine + ADP + phosphate + H(+)</text>
        <dbReference type="Rhea" id="RHEA:23372"/>
        <dbReference type="ChEBI" id="CHEBI:15378"/>
        <dbReference type="ChEBI" id="CHEBI:30616"/>
        <dbReference type="ChEBI" id="CHEBI:43474"/>
        <dbReference type="ChEBI" id="CHEBI:57972"/>
        <dbReference type="ChEBI" id="CHEBI:70757"/>
        <dbReference type="ChEBI" id="CHEBI:83898"/>
        <dbReference type="ChEBI" id="CHEBI:456216"/>
        <dbReference type="EC" id="6.3.2.8"/>
    </reaction>
</comment>
<comment type="pathway">
    <text evidence="1">Cell wall biogenesis; peptidoglycan biosynthesis.</text>
</comment>
<comment type="subcellular location">
    <subcellularLocation>
        <location evidence="1">Cytoplasm</location>
    </subcellularLocation>
</comment>
<comment type="similarity">
    <text evidence="1">Belongs to the MurCDEF family.</text>
</comment>
<sequence length="486" mass="54928">MNNKKKNINTISIIKMNDIKNIHFIGIGGCSMGGIAEILLKSGYNISGSDIVSNNITQQLSKLGAKIFFKHTEKNINRSDVIVISSAISCNNPEIIKAKKLNIPVISRAEMIAEIIRYKYNIAISGTHGKTSTTAIIFSIFEDSNLSPTLINGGYLKSINSNIKIGKNPFYCIVEADESDASFLHLKPITIILTNIEKDHIETYNGSFHNLKLAFIKFIHNLPFYGTAIMCIDNHAVQTILPYIKRNIITYGFSSNADVRIDRYVQKKFTSRFIVIRVNKPTLNVTLNLPGRHNALNATAAICVATQENIDDKNIIQSLKNFQGVQRRFELSKTFTINSKSHRKKEIMLINDYGHHPTEILESIHTARFGWPKKKLLMIFQPHRYTRTKNFLFSFSKTLSNVDELFILEVYAANEAIIPGADSTSLYKTIKKNKKNFVTLILDLNKLFLNIMSKLSDSNLILVQGAGNVDNIVKTFFIKKLKQYKN</sequence>
<reference key="1">
    <citation type="journal article" date="2003" name="Proc. Natl. Acad. Sci. U.S.A.">
        <title>Reductive genome evolution in Buchnera aphidicola.</title>
        <authorList>
            <person name="van Ham R.C.H.J."/>
            <person name="Kamerbeek J."/>
            <person name="Palacios C."/>
            <person name="Rausell C."/>
            <person name="Abascal F."/>
            <person name="Bastolla U."/>
            <person name="Fernandez J.M."/>
            <person name="Jimenez L."/>
            <person name="Postigo M."/>
            <person name="Silva F.J."/>
            <person name="Tamames J."/>
            <person name="Viguera E."/>
            <person name="Latorre A."/>
            <person name="Valencia A."/>
            <person name="Moran F."/>
            <person name="Moya A."/>
        </authorList>
    </citation>
    <scope>NUCLEOTIDE SEQUENCE [LARGE SCALE GENOMIC DNA]</scope>
    <source>
        <strain>Bp</strain>
    </source>
</reference>
<gene>
    <name evidence="1" type="primary">murC</name>
    <name type="ordered locus">bbp_197</name>
</gene>
<accession>P59418</accession>
<keyword id="KW-0067">ATP-binding</keyword>
<keyword id="KW-0131">Cell cycle</keyword>
<keyword id="KW-0132">Cell division</keyword>
<keyword id="KW-0133">Cell shape</keyword>
<keyword id="KW-0961">Cell wall biogenesis/degradation</keyword>
<keyword id="KW-0963">Cytoplasm</keyword>
<keyword id="KW-0436">Ligase</keyword>
<keyword id="KW-0547">Nucleotide-binding</keyword>
<keyword id="KW-0573">Peptidoglycan synthesis</keyword>
<keyword id="KW-1185">Reference proteome</keyword>
<feature type="chain" id="PRO_0000182070" description="UDP-N-acetylmuramate--L-alanine ligase">
    <location>
        <begin position="1"/>
        <end position="486"/>
    </location>
</feature>
<feature type="binding site" evidence="1">
    <location>
        <begin position="126"/>
        <end position="132"/>
    </location>
    <ligand>
        <name>ATP</name>
        <dbReference type="ChEBI" id="CHEBI:30616"/>
    </ligand>
</feature>
<protein>
    <recommendedName>
        <fullName evidence="1">UDP-N-acetylmuramate--L-alanine ligase</fullName>
        <ecNumber evidence="1">6.3.2.8</ecNumber>
    </recommendedName>
    <alternativeName>
        <fullName evidence="1">UDP-N-acetylmuramoyl-L-alanine synthetase</fullName>
    </alternativeName>
</protein>
<evidence type="ECO:0000255" key="1">
    <source>
        <dbReference type="HAMAP-Rule" id="MF_00046"/>
    </source>
</evidence>
<proteinExistence type="inferred from homology"/>
<dbReference type="EC" id="6.3.2.8" evidence="1"/>
<dbReference type="EMBL" id="AE016826">
    <property type="protein sequence ID" value="AAO26929.1"/>
    <property type="molecule type" value="Genomic_DNA"/>
</dbReference>
<dbReference type="RefSeq" id="WP_011091330.1">
    <property type="nucleotide sequence ID" value="NC_004545.1"/>
</dbReference>
<dbReference type="SMR" id="P59418"/>
<dbReference type="STRING" id="224915.bbp_197"/>
<dbReference type="KEGG" id="bab:bbp_197"/>
<dbReference type="eggNOG" id="COG0773">
    <property type="taxonomic scope" value="Bacteria"/>
</dbReference>
<dbReference type="HOGENOM" id="CLU_028104_2_2_6"/>
<dbReference type="OrthoDB" id="9804126at2"/>
<dbReference type="UniPathway" id="UPA00219"/>
<dbReference type="Proteomes" id="UP000000601">
    <property type="component" value="Chromosome"/>
</dbReference>
<dbReference type="GO" id="GO:0005737">
    <property type="term" value="C:cytoplasm"/>
    <property type="evidence" value="ECO:0007669"/>
    <property type="project" value="UniProtKB-SubCell"/>
</dbReference>
<dbReference type="GO" id="GO:0005524">
    <property type="term" value="F:ATP binding"/>
    <property type="evidence" value="ECO:0007669"/>
    <property type="project" value="UniProtKB-UniRule"/>
</dbReference>
<dbReference type="GO" id="GO:0008763">
    <property type="term" value="F:UDP-N-acetylmuramate-L-alanine ligase activity"/>
    <property type="evidence" value="ECO:0007669"/>
    <property type="project" value="UniProtKB-UniRule"/>
</dbReference>
<dbReference type="GO" id="GO:0051301">
    <property type="term" value="P:cell division"/>
    <property type="evidence" value="ECO:0007669"/>
    <property type="project" value="UniProtKB-KW"/>
</dbReference>
<dbReference type="GO" id="GO:0071555">
    <property type="term" value="P:cell wall organization"/>
    <property type="evidence" value="ECO:0007669"/>
    <property type="project" value="UniProtKB-KW"/>
</dbReference>
<dbReference type="GO" id="GO:0009252">
    <property type="term" value="P:peptidoglycan biosynthetic process"/>
    <property type="evidence" value="ECO:0007669"/>
    <property type="project" value="UniProtKB-UniRule"/>
</dbReference>
<dbReference type="GO" id="GO:0008360">
    <property type="term" value="P:regulation of cell shape"/>
    <property type="evidence" value="ECO:0007669"/>
    <property type="project" value="UniProtKB-KW"/>
</dbReference>
<dbReference type="Gene3D" id="3.90.190.20">
    <property type="entry name" value="Mur ligase, C-terminal domain"/>
    <property type="match status" value="1"/>
</dbReference>
<dbReference type="Gene3D" id="3.40.1190.10">
    <property type="entry name" value="Mur-like, catalytic domain"/>
    <property type="match status" value="1"/>
</dbReference>
<dbReference type="Gene3D" id="3.40.50.720">
    <property type="entry name" value="NAD(P)-binding Rossmann-like Domain"/>
    <property type="match status" value="1"/>
</dbReference>
<dbReference type="HAMAP" id="MF_00046">
    <property type="entry name" value="MurC"/>
    <property type="match status" value="1"/>
</dbReference>
<dbReference type="InterPro" id="IPR036565">
    <property type="entry name" value="Mur-like_cat_sf"/>
</dbReference>
<dbReference type="InterPro" id="IPR004101">
    <property type="entry name" value="Mur_ligase_C"/>
</dbReference>
<dbReference type="InterPro" id="IPR036615">
    <property type="entry name" value="Mur_ligase_C_dom_sf"/>
</dbReference>
<dbReference type="InterPro" id="IPR013221">
    <property type="entry name" value="Mur_ligase_cen"/>
</dbReference>
<dbReference type="InterPro" id="IPR000713">
    <property type="entry name" value="Mur_ligase_N"/>
</dbReference>
<dbReference type="InterPro" id="IPR050061">
    <property type="entry name" value="MurCDEF_pg_biosynth"/>
</dbReference>
<dbReference type="InterPro" id="IPR005758">
    <property type="entry name" value="UDP-N-AcMur_Ala_ligase_MurC"/>
</dbReference>
<dbReference type="NCBIfam" id="TIGR01082">
    <property type="entry name" value="murC"/>
    <property type="match status" value="1"/>
</dbReference>
<dbReference type="PANTHER" id="PTHR43445:SF3">
    <property type="entry name" value="UDP-N-ACETYLMURAMATE--L-ALANINE LIGASE"/>
    <property type="match status" value="1"/>
</dbReference>
<dbReference type="PANTHER" id="PTHR43445">
    <property type="entry name" value="UDP-N-ACETYLMURAMATE--L-ALANINE LIGASE-RELATED"/>
    <property type="match status" value="1"/>
</dbReference>
<dbReference type="Pfam" id="PF01225">
    <property type="entry name" value="Mur_ligase"/>
    <property type="match status" value="1"/>
</dbReference>
<dbReference type="Pfam" id="PF02875">
    <property type="entry name" value="Mur_ligase_C"/>
    <property type="match status" value="1"/>
</dbReference>
<dbReference type="Pfam" id="PF08245">
    <property type="entry name" value="Mur_ligase_M"/>
    <property type="match status" value="1"/>
</dbReference>
<dbReference type="SUPFAM" id="SSF51984">
    <property type="entry name" value="MurCD N-terminal domain"/>
    <property type="match status" value="1"/>
</dbReference>
<dbReference type="SUPFAM" id="SSF53623">
    <property type="entry name" value="MurD-like peptide ligases, catalytic domain"/>
    <property type="match status" value="1"/>
</dbReference>
<dbReference type="SUPFAM" id="SSF53244">
    <property type="entry name" value="MurD-like peptide ligases, peptide-binding domain"/>
    <property type="match status" value="1"/>
</dbReference>
<organism>
    <name type="scientific">Buchnera aphidicola subsp. Baizongia pistaciae (strain Bp)</name>
    <dbReference type="NCBI Taxonomy" id="224915"/>
    <lineage>
        <taxon>Bacteria</taxon>
        <taxon>Pseudomonadati</taxon>
        <taxon>Pseudomonadota</taxon>
        <taxon>Gammaproteobacteria</taxon>
        <taxon>Enterobacterales</taxon>
        <taxon>Erwiniaceae</taxon>
        <taxon>Buchnera</taxon>
    </lineage>
</organism>